<reference key="1">
    <citation type="journal article" date="2007" name="PLoS ONE">
        <title>The complete genome sequence and analysis of the Epsilonproteobacterium Arcobacter butzleri.</title>
        <authorList>
            <person name="Miller W.G."/>
            <person name="Parker C.T."/>
            <person name="Rubenfield M."/>
            <person name="Mendz G.L."/>
            <person name="Woesten M.M.S.M."/>
            <person name="Ussery D.W."/>
            <person name="Stolz J.F."/>
            <person name="Binnewies T.T."/>
            <person name="Hallin P.F."/>
            <person name="Wang G."/>
            <person name="Malek J.A."/>
            <person name="Rogosin A."/>
            <person name="Stanker L.H."/>
            <person name="Mandrell R.E."/>
        </authorList>
    </citation>
    <scope>NUCLEOTIDE SEQUENCE [LARGE SCALE GENOMIC DNA]</scope>
    <source>
        <strain>RM4018</strain>
    </source>
</reference>
<comment type="function">
    <text evidence="1">Peptide chain release factor 2 directs the termination of translation in response to the peptide chain termination codons UGA and UAA.</text>
</comment>
<comment type="subcellular location">
    <subcellularLocation>
        <location evidence="1">Cytoplasm</location>
    </subcellularLocation>
</comment>
<comment type="PTM">
    <text evidence="1">Methylated by PrmC. Methylation increases the termination efficiency of RF2.</text>
</comment>
<comment type="similarity">
    <text evidence="1">Belongs to the prokaryotic/mitochondrial release factor family.</text>
</comment>
<evidence type="ECO:0000255" key="1">
    <source>
        <dbReference type="HAMAP-Rule" id="MF_00094"/>
    </source>
</evidence>
<accession>A8EWG5</accession>
<keyword id="KW-0963">Cytoplasm</keyword>
<keyword id="KW-0488">Methylation</keyword>
<keyword id="KW-0648">Protein biosynthesis</keyword>
<keyword id="KW-1185">Reference proteome</keyword>
<sequence length="365" mass="41380">MDAYEYSELLKLLNTKLNNIKGILKPDILNKRLEEIKNEEASQDFWNDVENATKIGIEKNRILGKLNKFNKAFDSLTGTNELYEMATAEKDDETLEMLYEEASDLENLIKSTEISVMLSNPDDSSNAIVSIHPGAGGTESQDWASILYRMYLRWAERNDFKVELLDYQAGDEAGIKDVSFIIKGENAYGYMKAENGIHRLVRISPFDSNAKRHTSFSSVMVSPEIDDNINIVIEDKDIRIDTYRASGAGGQHVNKTESAIRITHIPTGIVVQCQNDRSQHKNKDSAFKMLKSRLYEYELEKQRASKDGIEKSDNGWGHQIRSYVLQPYQQVKDSRSNIGYSNVDAILDGDITKMIEDVLIATNTN</sequence>
<dbReference type="EMBL" id="CP000361">
    <property type="protein sequence ID" value="ABV68288.1"/>
    <property type="molecule type" value="Genomic_DNA"/>
</dbReference>
<dbReference type="RefSeq" id="WP_004510959.1">
    <property type="nucleotide sequence ID" value="NC_009850.1"/>
</dbReference>
<dbReference type="SMR" id="A8EWG5"/>
<dbReference type="STRING" id="367737.Abu_2071"/>
<dbReference type="GeneID" id="24303490"/>
<dbReference type="KEGG" id="abu:Abu_2071"/>
<dbReference type="eggNOG" id="COG1186">
    <property type="taxonomic scope" value="Bacteria"/>
</dbReference>
<dbReference type="HOGENOM" id="CLU_036856_6_0_7"/>
<dbReference type="Proteomes" id="UP000001136">
    <property type="component" value="Chromosome"/>
</dbReference>
<dbReference type="GO" id="GO:0005737">
    <property type="term" value="C:cytoplasm"/>
    <property type="evidence" value="ECO:0007669"/>
    <property type="project" value="UniProtKB-SubCell"/>
</dbReference>
<dbReference type="GO" id="GO:0016149">
    <property type="term" value="F:translation release factor activity, codon specific"/>
    <property type="evidence" value="ECO:0007669"/>
    <property type="project" value="UniProtKB-UniRule"/>
</dbReference>
<dbReference type="FunFam" id="3.30.160.20:FF:000010">
    <property type="entry name" value="Peptide chain release factor 2"/>
    <property type="match status" value="1"/>
</dbReference>
<dbReference type="Gene3D" id="3.30.160.20">
    <property type="match status" value="1"/>
</dbReference>
<dbReference type="Gene3D" id="3.30.70.1660">
    <property type="match status" value="1"/>
</dbReference>
<dbReference type="Gene3D" id="1.20.58.410">
    <property type="entry name" value="Release factor"/>
    <property type="match status" value="1"/>
</dbReference>
<dbReference type="HAMAP" id="MF_00094">
    <property type="entry name" value="Rel_fac_2"/>
    <property type="match status" value="1"/>
</dbReference>
<dbReference type="InterPro" id="IPR005139">
    <property type="entry name" value="PCRF"/>
</dbReference>
<dbReference type="InterPro" id="IPR000352">
    <property type="entry name" value="Pep_chain_release_fac_I"/>
</dbReference>
<dbReference type="InterPro" id="IPR045853">
    <property type="entry name" value="Pep_chain_release_fac_I_sf"/>
</dbReference>
<dbReference type="InterPro" id="IPR004374">
    <property type="entry name" value="PrfB"/>
</dbReference>
<dbReference type="NCBIfam" id="TIGR00020">
    <property type="entry name" value="prfB"/>
    <property type="match status" value="1"/>
</dbReference>
<dbReference type="PANTHER" id="PTHR43116:SF3">
    <property type="entry name" value="CLASS I PEPTIDE CHAIN RELEASE FACTOR"/>
    <property type="match status" value="1"/>
</dbReference>
<dbReference type="PANTHER" id="PTHR43116">
    <property type="entry name" value="PEPTIDE CHAIN RELEASE FACTOR 2"/>
    <property type="match status" value="1"/>
</dbReference>
<dbReference type="Pfam" id="PF03462">
    <property type="entry name" value="PCRF"/>
    <property type="match status" value="1"/>
</dbReference>
<dbReference type="Pfam" id="PF00472">
    <property type="entry name" value="RF-1"/>
    <property type="match status" value="1"/>
</dbReference>
<dbReference type="SMART" id="SM00937">
    <property type="entry name" value="PCRF"/>
    <property type="match status" value="1"/>
</dbReference>
<dbReference type="SUPFAM" id="SSF75620">
    <property type="entry name" value="Release factor"/>
    <property type="match status" value="1"/>
</dbReference>
<dbReference type="PROSITE" id="PS00745">
    <property type="entry name" value="RF_PROK_I"/>
    <property type="match status" value="1"/>
</dbReference>
<gene>
    <name evidence="1" type="primary">prfB</name>
    <name type="ordered locus">Abu_2071</name>
</gene>
<organism>
    <name type="scientific">Aliarcobacter butzleri (strain RM4018)</name>
    <name type="common">Arcobacter butzleri</name>
    <dbReference type="NCBI Taxonomy" id="367737"/>
    <lineage>
        <taxon>Bacteria</taxon>
        <taxon>Pseudomonadati</taxon>
        <taxon>Campylobacterota</taxon>
        <taxon>Epsilonproteobacteria</taxon>
        <taxon>Campylobacterales</taxon>
        <taxon>Arcobacteraceae</taxon>
        <taxon>Aliarcobacter</taxon>
    </lineage>
</organism>
<feature type="chain" id="PRO_1000057622" description="Peptide chain release factor 2">
    <location>
        <begin position="1"/>
        <end position="365"/>
    </location>
</feature>
<feature type="modified residue" description="N5-methylglutamine" evidence="1">
    <location>
        <position position="251"/>
    </location>
</feature>
<proteinExistence type="inferred from homology"/>
<name>RF2_ALIB4</name>
<protein>
    <recommendedName>
        <fullName evidence="1">Peptide chain release factor 2</fullName>
        <shortName evidence="1">RF-2</shortName>
    </recommendedName>
</protein>